<sequence>MTDSQQSKPKHVMMMAAGTGGHVFPALAVAKQLQQQGCQVSWLATPTGMENRLLKDQNIPIYQIDIQGVRGNGVIRKLAAPFKILKATFSAMRYMKQLKVDAVAGFGGYVAGPGGLAARLLGIPVLIHEQNAVAGFTNAQLSRVAKVVCEAFPNTFPASEKVVTTGNPVRREITDILSPKWRYDEREQADKPLNILIVGGSLGAKALNERLPPALKQLEVPLNIFHQCGQQQVEATQALYADAPANLTIQVLPFIEDMAKAYSEADLIICRAGALTVTEVATAGVAAVFVPLPIAVDDHQTANAKFLADIGAAKICQQSTMTPEVLNQLFTTLMNRQLLTEMAVKARQHAQPNATQHVVDLIQKM</sequence>
<reference key="1">
    <citation type="journal article" date="2007" name="Genes Dev.">
        <title>New insights into Acinetobacter baumannii pathogenesis revealed by high-density pyrosequencing and transposon mutagenesis.</title>
        <authorList>
            <person name="Smith M.G."/>
            <person name="Gianoulis T.A."/>
            <person name="Pukatzki S."/>
            <person name="Mekalanos J.J."/>
            <person name="Ornston L.N."/>
            <person name="Gerstein M."/>
            <person name="Snyder M."/>
        </authorList>
    </citation>
    <scope>NUCLEOTIDE SEQUENCE [LARGE SCALE GENOMIC DNA]</scope>
    <source>
        <strain>ATCC 17978 / DSM 105126 / CIP 53.77 / LMG 1025 / NCDC KC755 / 5377</strain>
    </source>
</reference>
<evidence type="ECO:0000255" key="1">
    <source>
        <dbReference type="HAMAP-Rule" id="MF_00033"/>
    </source>
</evidence>
<evidence type="ECO:0007829" key="2">
    <source>
        <dbReference type="PDB" id="7D1I"/>
    </source>
</evidence>
<keyword id="KW-0002">3D-structure</keyword>
<keyword id="KW-0131">Cell cycle</keyword>
<keyword id="KW-0132">Cell division</keyword>
<keyword id="KW-0997">Cell inner membrane</keyword>
<keyword id="KW-1003">Cell membrane</keyword>
<keyword id="KW-0133">Cell shape</keyword>
<keyword id="KW-0961">Cell wall biogenesis/degradation</keyword>
<keyword id="KW-0328">Glycosyltransferase</keyword>
<keyword id="KW-0472">Membrane</keyword>
<keyword id="KW-0573">Peptidoglycan synthesis</keyword>
<keyword id="KW-0808">Transferase</keyword>
<dbReference type="EC" id="2.4.1.227" evidence="1"/>
<dbReference type="EMBL" id="CP000521">
    <property type="protein sequence ID" value="ABO13725.2"/>
    <property type="molecule type" value="Genomic_DNA"/>
</dbReference>
<dbReference type="RefSeq" id="WP_000132430.1">
    <property type="nucleotide sequence ID" value="NZ_CACVBA010000001.1"/>
</dbReference>
<dbReference type="PDB" id="7D1I">
    <property type="method" value="X-ray"/>
    <property type="resolution" value="3.49 A"/>
    <property type="chains" value="A/B/C=1-365"/>
</dbReference>
<dbReference type="PDBsum" id="7D1I"/>
<dbReference type="SMR" id="A3M9Y1"/>
<dbReference type="CAZy" id="GT28">
    <property type="family name" value="Glycosyltransferase Family 28"/>
</dbReference>
<dbReference type="KEGG" id="acb:A1S_3336"/>
<dbReference type="HOGENOM" id="CLU_037404_2_0_6"/>
<dbReference type="UniPathway" id="UPA00219"/>
<dbReference type="GO" id="GO:0005886">
    <property type="term" value="C:plasma membrane"/>
    <property type="evidence" value="ECO:0007669"/>
    <property type="project" value="UniProtKB-SubCell"/>
</dbReference>
<dbReference type="GO" id="GO:0051991">
    <property type="term" value="F:UDP-N-acetyl-D-glucosamine:N-acetylmuramoyl-L-alanyl-D-glutamyl-meso-2,6-diaminopimelyl-D-alanyl-D-alanine-diphosphoundecaprenol 4-beta-N-acetylglucosaminlytransferase activity"/>
    <property type="evidence" value="ECO:0007669"/>
    <property type="project" value="RHEA"/>
</dbReference>
<dbReference type="GO" id="GO:0050511">
    <property type="term" value="F:undecaprenyldiphospho-muramoylpentapeptide beta-N-acetylglucosaminyltransferase activity"/>
    <property type="evidence" value="ECO:0007669"/>
    <property type="project" value="UniProtKB-UniRule"/>
</dbReference>
<dbReference type="GO" id="GO:0005975">
    <property type="term" value="P:carbohydrate metabolic process"/>
    <property type="evidence" value="ECO:0007669"/>
    <property type="project" value="InterPro"/>
</dbReference>
<dbReference type="GO" id="GO:0051301">
    <property type="term" value="P:cell division"/>
    <property type="evidence" value="ECO:0007669"/>
    <property type="project" value="UniProtKB-KW"/>
</dbReference>
<dbReference type="GO" id="GO:0071555">
    <property type="term" value="P:cell wall organization"/>
    <property type="evidence" value="ECO:0007669"/>
    <property type="project" value="UniProtKB-KW"/>
</dbReference>
<dbReference type="GO" id="GO:0030259">
    <property type="term" value="P:lipid glycosylation"/>
    <property type="evidence" value="ECO:0007669"/>
    <property type="project" value="UniProtKB-UniRule"/>
</dbReference>
<dbReference type="GO" id="GO:0009252">
    <property type="term" value="P:peptidoglycan biosynthetic process"/>
    <property type="evidence" value="ECO:0007669"/>
    <property type="project" value="UniProtKB-UniRule"/>
</dbReference>
<dbReference type="GO" id="GO:0008360">
    <property type="term" value="P:regulation of cell shape"/>
    <property type="evidence" value="ECO:0007669"/>
    <property type="project" value="UniProtKB-KW"/>
</dbReference>
<dbReference type="CDD" id="cd03785">
    <property type="entry name" value="GT28_MurG"/>
    <property type="match status" value="1"/>
</dbReference>
<dbReference type="Gene3D" id="3.40.50.2000">
    <property type="entry name" value="Glycogen Phosphorylase B"/>
    <property type="match status" value="2"/>
</dbReference>
<dbReference type="HAMAP" id="MF_00033">
    <property type="entry name" value="MurG"/>
    <property type="match status" value="1"/>
</dbReference>
<dbReference type="InterPro" id="IPR006009">
    <property type="entry name" value="GlcNAc_MurG"/>
</dbReference>
<dbReference type="InterPro" id="IPR007235">
    <property type="entry name" value="Glyco_trans_28_C"/>
</dbReference>
<dbReference type="InterPro" id="IPR004276">
    <property type="entry name" value="GlycoTrans_28_N"/>
</dbReference>
<dbReference type="NCBIfam" id="TIGR01133">
    <property type="entry name" value="murG"/>
    <property type="match status" value="1"/>
</dbReference>
<dbReference type="PANTHER" id="PTHR21015:SF22">
    <property type="entry name" value="GLYCOSYLTRANSFERASE"/>
    <property type="match status" value="1"/>
</dbReference>
<dbReference type="PANTHER" id="PTHR21015">
    <property type="entry name" value="UDP-N-ACETYLGLUCOSAMINE--N-ACETYLMURAMYL-(PENTAPEPTIDE) PYROPHOSPHORYL-UNDECAPRENOL N-ACETYLGLUCOSAMINE TRANSFERASE 1"/>
    <property type="match status" value="1"/>
</dbReference>
<dbReference type="Pfam" id="PF04101">
    <property type="entry name" value="Glyco_tran_28_C"/>
    <property type="match status" value="1"/>
</dbReference>
<dbReference type="Pfam" id="PF03033">
    <property type="entry name" value="Glyco_transf_28"/>
    <property type="match status" value="1"/>
</dbReference>
<dbReference type="SUPFAM" id="SSF53756">
    <property type="entry name" value="UDP-Glycosyltransferase/glycogen phosphorylase"/>
    <property type="match status" value="1"/>
</dbReference>
<protein>
    <recommendedName>
        <fullName evidence="1">UDP-N-acetylglucosamine--N-acetylmuramyl-(pentapeptide) pyrophosphoryl-undecaprenol N-acetylglucosamine transferase</fullName>
        <ecNumber evidence="1">2.4.1.227</ecNumber>
    </recommendedName>
    <alternativeName>
        <fullName evidence="1">Undecaprenyl-PP-MurNAc-pentapeptide-UDPGlcNAc GlcNAc transferase</fullName>
    </alternativeName>
</protein>
<organism>
    <name type="scientific">Acinetobacter baumannii (strain ATCC 17978 / DSM 105126 / CIP 53.77 / LMG 1025 / NCDC KC755 / 5377)</name>
    <dbReference type="NCBI Taxonomy" id="400667"/>
    <lineage>
        <taxon>Bacteria</taxon>
        <taxon>Pseudomonadati</taxon>
        <taxon>Pseudomonadota</taxon>
        <taxon>Gammaproteobacteria</taxon>
        <taxon>Moraxellales</taxon>
        <taxon>Moraxellaceae</taxon>
        <taxon>Acinetobacter</taxon>
        <taxon>Acinetobacter calcoaceticus/baumannii complex</taxon>
    </lineage>
</organism>
<feature type="chain" id="PRO_0000315060" description="UDP-N-acetylglucosamine--N-acetylmuramyl-(pentapeptide) pyrophosphoryl-undecaprenol N-acetylglucosamine transferase">
    <location>
        <begin position="1"/>
        <end position="365"/>
    </location>
</feature>
<feature type="binding site" evidence="1">
    <location>
        <begin position="19"/>
        <end position="21"/>
    </location>
    <ligand>
        <name>UDP-N-acetyl-alpha-D-glucosamine</name>
        <dbReference type="ChEBI" id="CHEBI:57705"/>
    </ligand>
</feature>
<feature type="binding site" evidence="1">
    <location>
        <position position="131"/>
    </location>
    <ligand>
        <name>UDP-N-acetyl-alpha-D-glucosamine</name>
        <dbReference type="ChEBI" id="CHEBI:57705"/>
    </ligand>
</feature>
<feature type="binding site" evidence="1">
    <location>
        <position position="170"/>
    </location>
    <ligand>
        <name>UDP-N-acetyl-alpha-D-glucosamine</name>
        <dbReference type="ChEBI" id="CHEBI:57705"/>
    </ligand>
</feature>
<feature type="binding site" evidence="1">
    <location>
        <position position="201"/>
    </location>
    <ligand>
        <name>UDP-N-acetyl-alpha-D-glucosamine</name>
        <dbReference type="ChEBI" id="CHEBI:57705"/>
    </ligand>
</feature>
<feature type="binding site" evidence="1">
    <location>
        <position position="255"/>
    </location>
    <ligand>
        <name>UDP-N-acetyl-alpha-D-glucosamine</name>
        <dbReference type="ChEBI" id="CHEBI:57705"/>
    </ligand>
</feature>
<feature type="binding site" evidence="1">
    <location>
        <begin position="274"/>
        <end position="279"/>
    </location>
    <ligand>
        <name>UDP-N-acetyl-alpha-D-glucosamine</name>
        <dbReference type="ChEBI" id="CHEBI:57705"/>
    </ligand>
</feature>
<feature type="binding site" evidence="1">
    <location>
        <position position="300"/>
    </location>
    <ligand>
        <name>UDP-N-acetyl-alpha-D-glucosamine</name>
        <dbReference type="ChEBI" id="CHEBI:57705"/>
    </ligand>
</feature>
<feature type="strand" evidence="2">
    <location>
        <begin position="11"/>
        <end position="15"/>
    </location>
</feature>
<feature type="turn" evidence="2">
    <location>
        <begin position="18"/>
        <end position="22"/>
    </location>
</feature>
<feature type="helix" evidence="2">
    <location>
        <begin position="23"/>
        <end position="35"/>
    </location>
</feature>
<feature type="strand" evidence="2">
    <location>
        <begin position="39"/>
        <end position="44"/>
    </location>
</feature>
<feature type="strand" evidence="2">
    <location>
        <begin position="46"/>
        <end position="48"/>
    </location>
</feature>
<feature type="helix" evidence="2">
    <location>
        <begin position="50"/>
        <end position="53"/>
    </location>
</feature>
<feature type="turn" evidence="2">
    <location>
        <begin position="54"/>
        <end position="56"/>
    </location>
</feature>
<feature type="strand" evidence="2">
    <location>
        <begin position="57"/>
        <end position="59"/>
    </location>
</feature>
<feature type="strand" evidence="2">
    <location>
        <begin position="61"/>
        <end position="63"/>
    </location>
</feature>
<feature type="strand" evidence="2">
    <location>
        <begin position="73"/>
        <end position="75"/>
    </location>
</feature>
<feature type="helix" evidence="2">
    <location>
        <begin position="80"/>
        <end position="97"/>
    </location>
</feature>
<feature type="strand" evidence="2">
    <location>
        <begin position="101"/>
        <end position="105"/>
    </location>
</feature>
<feature type="strand" evidence="2">
    <location>
        <begin position="107"/>
        <end position="109"/>
    </location>
</feature>
<feature type="helix" evidence="2">
    <location>
        <begin position="111"/>
        <end position="121"/>
    </location>
</feature>
<feature type="strand" evidence="2">
    <location>
        <begin position="125"/>
        <end position="129"/>
    </location>
</feature>
<feature type="strand" evidence="2">
    <location>
        <begin position="131"/>
        <end position="133"/>
    </location>
</feature>
<feature type="helix" evidence="2">
    <location>
        <begin position="136"/>
        <end position="141"/>
    </location>
</feature>
<feature type="turn" evidence="2">
    <location>
        <begin position="142"/>
        <end position="144"/>
    </location>
</feature>
<feature type="strand" evidence="2">
    <location>
        <begin position="146"/>
        <end position="152"/>
    </location>
</feature>
<feature type="helix" evidence="2">
    <location>
        <begin position="182"/>
        <end position="186"/>
    </location>
</feature>
<feature type="strand" evidence="2">
    <location>
        <begin position="196"/>
        <end position="198"/>
    </location>
</feature>
<feature type="helix" evidence="2">
    <location>
        <begin position="205"/>
        <end position="208"/>
    </location>
</feature>
<feature type="helix" evidence="2">
    <location>
        <begin position="211"/>
        <end position="215"/>
    </location>
</feature>
<feature type="strand" evidence="2">
    <location>
        <begin position="223"/>
        <end position="227"/>
    </location>
</feature>
<feature type="helix" evidence="2">
    <location>
        <begin position="233"/>
        <end position="240"/>
    </location>
</feature>
<feature type="strand" evidence="2">
    <location>
        <begin position="248"/>
        <end position="254"/>
    </location>
</feature>
<feature type="helix" evidence="2">
    <location>
        <begin position="258"/>
        <end position="264"/>
    </location>
</feature>
<feature type="strand" evidence="2">
    <location>
        <begin position="266"/>
        <end position="270"/>
    </location>
</feature>
<feature type="helix" evidence="2">
    <location>
        <begin position="275"/>
        <end position="283"/>
    </location>
</feature>
<feature type="strand" evidence="2">
    <location>
        <begin position="286"/>
        <end position="289"/>
    </location>
</feature>
<feature type="helix" evidence="2">
    <location>
        <begin position="299"/>
        <end position="310"/>
    </location>
</feature>
<feature type="strand" evidence="2">
    <location>
        <begin position="312"/>
        <end position="315"/>
    </location>
</feature>
<feature type="turn" evidence="2">
    <location>
        <begin position="318"/>
        <end position="320"/>
    </location>
</feature>
<feature type="helix" evidence="2">
    <location>
        <begin position="323"/>
        <end position="333"/>
    </location>
</feature>
<feature type="helix" evidence="2">
    <location>
        <begin position="336"/>
        <end position="348"/>
    </location>
</feature>
<feature type="helix" evidence="2">
    <location>
        <begin position="355"/>
        <end position="363"/>
    </location>
</feature>
<name>MURG_ACIBT</name>
<gene>
    <name evidence="1" type="primary">murG</name>
    <name type="ordered locus">A1S_3336</name>
</gene>
<proteinExistence type="evidence at protein level"/>
<comment type="function">
    <text evidence="1">Cell wall formation. Catalyzes the transfer of a GlcNAc subunit on undecaprenyl-pyrophosphoryl-MurNAc-pentapeptide (lipid intermediate I) to form undecaprenyl-pyrophosphoryl-MurNAc-(pentapeptide)GlcNAc (lipid intermediate II).</text>
</comment>
<comment type="catalytic activity">
    <reaction evidence="1">
        <text>di-trans,octa-cis-undecaprenyl diphospho-N-acetyl-alpha-D-muramoyl-L-alanyl-D-glutamyl-meso-2,6-diaminopimeloyl-D-alanyl-D-alanine + UDP-N-acetyl-alpha-D-glucosamine = di-trans,octa-cis-undecaprenyl diphospho-[N-acetyl-alpha-D-glucosaminyl-(1-&gt;4)]-N-acetyl-alpha-D-muramoyl-L-alanyl-D-glutamyl-meso-2,6-diaminopimeloyl-D-alanyl-D-alanine + UDP + H(+)</text>
        <dbReference type="Rhea" id="RHEA:31227"/>
        <dbReference type="ChEBI" id="CHEBI:15378"/>
        <dbReference type="ChEBI" id="CHEBI:57705"/>
        <dbReference type="ChEBI" id="CHEBI:58223"/>
        <dbReference type="ChEBI" id="CHEBI:61387"/>
        <dbReference type="ChEBI" id="CHEBI:61388"/>
        <dbReference type="EC" id="2.4.1.227"/>
    </reaction>
</comment>
<comment type="pathway">
    <text evidence="1">Cell wall biogenesis; peptidoglycan biosynthesis.</text>
</comment>
<comment type="subcellular location">
    <subcellularLocation>
        <location evidence="1">Cell inner membrane</location>
        <topology evidence="1">Peripheral membrane protein</topology>
        <orientation evidence="1">Cytoplasmic side</orientation>
    </subcellularLocation>
</comment>
<comment type="similarity">
    <text evidence="1">Belongs to the glycosyltransferase 28 family. MurG subfamily.</text>
</comment>
<accession>A3M9Y1</accession>